<protein>
    <recommendedName>
        <fullName evidence="2">Translation initiation factor IF-2</fullName>
    </recommendedName>
</protein>
<accession>Q7NBZ4</accession>
<reference key="1">
    <citation type="journal article" date="2003" name="Microbiology">
        <title>The complete genome sequence of the avian pathogen Mycoplasma gallisepticum strain R(low).</title>
        <authorList>
            <person name="Papazisi L."/>
            <person name="Gorton T.S."/>
            <person name="Kutish G."/>
            <person name="Markham P.F."/>
            <person name="Browning G.F."/>
            <person name="Nguyen D.K."/>
            <person name="Swartzell S."/>
            <person name="Madan A."/>
            <person name="Mahairas G."/>
            <person name="Geary S.J."/>
        </authorList>
    </citation>
    <scope>NUCLEOTIDE SEQUENCE [LARGE SCALE GENOMIC DNA]</scope>
    <source>
        <strain>R(low / passage 15 / clone 2)</strain>
    </source>
</reference>
<name>IF2_MYCGA</name>
<sequence>MNKKPTRNKKPVDQRSKINIKSYLKEVQVGVKDGVFIYTDPLSIDQFAKKVNQPVAKIIKHFFSKGINTINLNTILSLEQIGELCLDLGLDFKIEKSVTSENLLDNIEFKDKKEDLVKRPPIVTVMGHVDHGKTSLLDAIRSTNVTSNEAGGITQHIGAYQVKKNDELITFIDTPGHEAFTEMRARGANLTDIVVLVVAGDDGIKPQTEEAIDHAKNANVPIIVFVNKMDKSGANFDRVIQQISKYDLSPEEYGGDTIFVQGSAIKKEGINELLDAILTLAEINEYKANPNADPYGIVIESKLEPGLGPQATVIIKRGTLKVGDYICIGAAYGKVRIMQDENGNNLTEATPSRPVKISGLDAIPQAGEKFLGLATEKEVKELSDSYKLKQQKQKHLSLQESHEKRTRINTNGIKCVDLIIKSDVQGSLEAIKYAISNINIEGVTTNIIRASTGVISETDIKLAQASNSTVISFNLGVSKQIRDLANSDNVQILSYEIIYKMVEDLEKIMKGELDPVYEESVIGQAVVRVLWKHSKIGTIAGSYVTSGKVVKNALCRVLRDDVIIYKSKIASLKSKTTFVDKVEHNKECGIVVENYNDIKEDDIIEVYEIVKKRVY</sequence>
<keyword id="KW-0963">Cytoplasm</keyword>
<keyword id="KW-0342">GTP-binding</keyword>
<keyword id="KW-0396">Initiation factor</keyword>
<keyword id="KW-0547">Nucleotide-binding</keyword>
<keyword id="KW-0648">Protein biosynthesis</keyword>
<keyword id="KW-1185">Reference proteome</keyword>
<dbReference type="EMBL" id="AE015450">
    <property type="protein sequence ID" value="AAP56465.1"/>
    <property type="molecule type" value="Genomic_DNA"/>
</dbReference>
<dbReference type="RefSeq" id="WP_011113343.1">
    <property type="nucleotide sequence ID" value="NC_004829.2"/>
</dbReference>
<dbReference type="SMR" id="Q7NBZ4"/>
<dbReference type="GeneID" id="93509930"/>
<dbReference type="KEGG" id="mga:MGA_0821"/>
<dbReference type="PATRIC" id="fig|233150.7.peg.125"/>
<dbReference type="HOGENOM" id="CLU_006301_5_1_14"/>
<dbReference type="OrthoDB" id="9811804at2"/>
<dbReference type="Proteomes" id="UP000001418">
    <property type="component" value="Chromosome"/>
</dbReference>
<dbReference type="GO" id="GO:0005829">
    <property type="term" value="C:cytosol"/>
    <property type="evidence" value="ECO:0007669"/>
    <property type="project" value="TreeGrafter"/>
</dbReference>
<dbReference type="GO" id="GO:0005525">
    <property type="term" value="F:GTP binding"/>
    <property type="evidence" value="ECO:0007669"/>
    <property type="project" value="UniProtKB-KW"/>
</dbReference>
<dbReference type="GO" id="GO:0003924">
    <property type="term" value="F:GTPase activity"/>
    <property type="evidence" value="ECO:0007669"/>
    <property type="project" value="UniProtKB-UniRule"/>
</dbReference>
<dbReference type="GO" id="GO:0003743">
    <property type="term" value="F:translation initiation factor activity"/>
    <property type="evidence" value="ECO:0007669"/>
    <property type="project" value="UniProtKB-UniRule"/>
</dbReference>
<dbReference type="CDD" id="cd01887">
    <property type="entry name" value="IF2_eIF5B"/>
    <property type="match status" value="1"/>
</dbReference>
<dbReference type="CDD" id="cd03702">
    <property type="entry name" value="IF2_mtIF2_II"/>
    <property type="match status" value="1"/>
</dbReference>
<dbReference type="CDD" id="cd03692">
    <property type="entry name" value="mtIF2_IVc"/>
    <property type="match status" value="1"/>
</dbReference>
<dbReference type="FunFam" id="2.40.30.10:FF:000008">
    <property type="entry name" value="Translation initiation factor IF-2"/>
    <property type="match status" value="1"/>
</dbReference>
<dbReference type="FunFam" id="2.40.30.10:FF:000054">
    <property type="entry name" value="Translation initiation factor IF-2"/>
    <property type="match status" value="1"/>
</dbReference>
<dbReference type="FunFam" id="3.40.50.10050:FF:000001">
    <property type="entry name" value="Translation initiation factor IF-2"/>
    <property type="match status" value="1"/>
</dbReference>
<dbReference type="FunFam" id="3.40.50.300:FF:000019">
    <property type="entry name" value="Translation initiation factor IF-2"/>
    <property type="match status" value="1"/>
</dbReference>
<dbReference type="Gene3D" id="3.40.50.300">
    <property type="entry name" value="P-loop containing nucleotide triphosphate hydrolases"/>
    <property type="match status" value="1"/>
</dbReference>
<dbReference type="Gene3D" id="2.40.30.10">
    <property type="entry name" value="Translation factors"/>
    <property type="match status" value="2"/>
</dbReference>
<dbReference type="Gene3D" id="3.40.50.10050">
    <property type="entry name" value="Translation initiation factor IF- 2, domain 3"/>
    <property type="match status" value="1"/>
</dbReference>
<dbReference type="HAMAP" id="MF_00100_B">
    <property type="entry name" value="IF_2_B"/>
    <property type="match status" value="1"/>
</dbReference>
<dbReference type="InterPro" id="IPR053905">
    <property type="entry name" value="EF-G-like_DII"/>
</dbReference>
<dbReference type="InterPro" id="IPR044145">
    <property type="entry name" value="IF2_II"/>
</dbReference>
<dbReference type="InterPro" id="IPR006847">
    <property type="entry name" value="IF2_N"/>
</dbReference>
<dbReference type="InterPro" id="IPR027417">
    <property type="entry name" value="P-loop_NTPase"/>
</dbReference>
<dbReference type="InterPro" id="IPR005225">
    <property type="entry name" value="Small_GTP-bd"/>
</dbReference>
<dbReference type="InterPro" id="IPR000795">
    <property type="entry name" value="T_Tr_GTP-bd_dom"/>
</dbReference>
<dbReference type="InterPro" id="IPR000178">
    <property type="entry name" value="TF_IF2_bacterial-like"/>
</dbReference>
<dbReference type="InterPro" id="IPR015760">
    <property type="entry name" value="TIF_IF2"/>
</dbReference>
<dbReference type="InterPro" id="IPR023115">
    <property type="entry name" value="TIF_IF2_dom3"/>
</dbReference>
<dbReference type="InterPro" id="IPR036925">
    <property type="entry name" value="TIF_IF2_dom3_sf"/>
</dbReference>
<dbReference type="InterPro" id="IPR009000">
    <property type="entry name" value="Transl_B-barrel_sf"/>
</dbReference>
<dbReference type="NCBIfam" id="TIGR00487">
    <property type="entry name" value="IF-2"/>
    <property type="match status" value="1"/>
</dbReference>
<dbReference type="NCBIfam" id="TIGR00231">
    <property type="entry name" value="small_GTP"/>
    <property type="match status" value="1"/>
</dbReference>
<dbReference type="PANTHER" id="PTHR43381:SF5">
    <property type="entry name" value="TR-TYPE G DOMAIN-CONTAINING PROTEIN"/>
    <property type="match status" value="1"/>
</dbReference>
<dbReference type="PANTHER" id="PTHR43381">
    <property type="entry name" value="TRANSLATION INITIATION FACTOR IF-2-RELATED"/>
    <property type="match status" value="1"/>
</dbReference>
<dbReference type="Pfam" id="PF22042">
    <property type="entry name" value="EF-G_D2"/>
    <property type="match status" value="1"/>
</dbReference>
<dbReference type="Pfam" id="PF00009">
    <property type="entry name" value="GTP_EFTU"/>
    <property type="match status" value="1"/>
</dbReference>
<dbReference type="Pfam" id="PF11987">
    <property type="entry name" value="IF-2"/>
    <property type="match status" value="1"/>
</dbReference>
<dbReference type="Pfam" id="PF04760">
    <property type="entry name" value="IF2_N"/>
    <property type="match status" value="1"/>
</dbReference>
<dbReference type="SUPFAM" id="SSF52156">
    <property type="entry name" value="Initiation factor IF2/eIF5b, domain 3"/>
    <property type="match status" value="1"/>
</dbReference>
<dbReference type="SUPFAM" id="SSF52540">
    <property type="entry name" value="P-loop containing nucleoside triphosphate hydrolases"/>
    <property type="match status" value="1"/>
</dbReference>
<dbReference type="SUPFAM" id="SSF50447">
    <property type="entry name" value="Translation proteins"/>
    <property type="match status" value="2"/>
</dbReference>
<dbReference type="PROSITE" id="PS51722">
    <property type="entry name" value="G_TR_2"/>
    <property type="match status" value="1"/>
</dbReference>
<gene>
    <name evidence="2" type="primary">infB</name>
    <name type="ordered locus">MYCGA1150</name>
    <name type="ORF">MGA_0821</name>
</gene>
<feature type="chain" id="PRO_0000137220" description="Translation initiation factor IF-2">
    <location>
        <begin position="1"/>
        <end position="615"/>
    </location>
</feature>
<feature type="domain" description="tr-type G">
    <location>
        <begin position="118"/>
        <end position="285"/>
    </location>
</feature>
<feature type="region of interest" description="G1" evidence="1">
    <location>
        <begin position="127"/>
        <end position="134"/>
    </location>
</feature>
<feature type="region of interest" description="G2" evidence="1">
    <location>
        <begin position="152"/>
        <end position="156"/>
    </location>
</feature>
<feature type="region of interest" description="G3" evidence="1">
    <location>
        <begin position="173"/>
        <end position="176"/>
    </location>
</feature>
<feature type="region of interest" description="G4" evidence="1">
    <location>
        <begin position="227"/>
        <end position="230"/>
    </location>
</feature>
<feature type="region of interest" description="G5" evidence="1">
    <location>
        <begin position="263"/>
        <end position="265"/>
    </location>
</feature>
<feature type="binding site" evidence="2">
    <location>
        <begin position="127"/>
        <end position="134"/>
    </location>
    <ligand>
        <name>GTP</name>
        <dbReference type="ChEBI" id="CHEBI:37565"/>
    </ligand>
</feature>
<feature type="binding site" evidence="2">
    <location>
        <begin position="173"/>
        <end position="177"/>
    </location>
    <ligand>
        <name>GTP</name>
        <dbReference type="ChEBI" id="CHEBI:37565"/>
    </ligand>
</feature>
<feature type="binding site" evidence="2">
    <location>
        <begin position="227"/>
        <end position="230"/>
    </location>
    <ligand>
        <name>GTP</name>
        <dbReference type="ChEBI" id="CHEBI:37565"/>
    </ligand>
</feature>
<comment type="function">
    <text evidence="2">One of the essential components for the initiation of protein synthesis. Protects formylmethionyl-tRNA from spontaneous hydrolysis and promotes its binding to the 30S ribosomal subunits. Also involved in the hydrolysis of GTP during the formation of the 70S ribosomal complex.</text>
</comment>
<comment type="subcellular location">
    <subcellularLocation>
        <location evidence="2">Cytoplasm</location>
    </subcellularLocation>
</comment>
<comment type="similarity">
    <text evidence="2">Belongs to the TRAFAC class translation factor GTPase superfamily. Classic translation factor GTPase family. IF-2 subfamily.</text>
</comment>
<organism>
    <name type="scientific">Mycoplasmoides gallisepticum (strain R(low / passage 15 / clone 2))</name>
    <name type="common">Mycoplasma gallisepticum</name>
    <dbReference type="NCBI Taxonomy" id="710127"/>
    <lineage>
        <taxon>Bacteria</taxon>
        <taxon>Bacillati</taxon>
        <taxon>Mycoplasmatota</taxon>
        <taxon>Mycoplasmoidales</taxon>
        <taxon>Mycoplasmoidaceae</taxon>
        <taxon>Mycoplasmoides</taxon>
    </lineage>
</organism>
<proteinExistence type="inferred from homology"/>
<evidence type="ECO:0000250" key="1"/>
<evidence type="ECO:0000255" key="2">
    <source>
        <dbReference type="HAMAP-Rule" id="MF_00100"/>
    </source>
</evidence>